<reference key="1">
    <citation type="journal article" date="2006" name="Proc. Natl. Acad. Sci. U.S.A.">
        <title>Comparative genomics of the lactic acid bacteria.</title>
        <authorList>
            <person name="Makarova K.S."/>
            <person name="Slesarev A."/>
            <person name="Wolf Y.I."/>
            <person name="Sorokin A."/>
            <person name="Mirkin B."/>
            <person name="Koonin E.V."/>
            <person name="Pavlov A."/>
            <person name="Pavlova N."/>
            <person name="Karamychev V."/>
            <person name="Polouchine N."/>
            <person name="Shakhova V."/>
            <person name="Grigoriev I."/>
            <person name="Lou Y."/>
            <person name="Rohksar D."/>
            <person name="Lucas S."/>
            <person name="Huang K."/>
            <person name="Goodstein D.M."/>
            <person name="Hawkins T."/>
            <person name="Plengvidhya V."/>
            <person name="Welker D."/>
            <person name="Hughes J."/>
            <person name="Goh Y."/>
            <person name="Benson A."/>
            <person name="Baldwin K."/>
            <person name="Lee J.-H."/>
            <person name="Diaz-Muniz I."/>
            <person name="Dosti B."/>
            <person name="Smeianov V."/>
            <person name="Wechter W."/>
            <person name="Barabote R."/>
            <person name="Lorca G."/>
            <person name="Altermann E."/>
            <person name="Barrangou R."/>
            <person name="Ganesan B."/>
            <person name="Xie Y."/>
            <person name="Rawsthorne H."/>
            <person name="Tamir D."/>
            <person name="Parker C."/>
            <person name="Breidt F."/>
            <person name="Broadbent J.R."/>
            <person name="Hutkins R."/>
            <person name="O'Sullivan D."/>
            <person name="Steele J."/>
            <person name="Unlu G."/>
            <person name="Saier M.H. Jr."/>
            <person name="Klaenhammer T."/>
            <person name="Richardson P."/>
            <person name="Kozyavkin S."/>
            <person name="Weimer B.C."/>
            <person name="Mills D.A."/>
        </authorList>
    </citation>
    <scope>NUCLEOTIDE SEQUENCE [LARGE SCALE GENOMIC DNA]</scope>
    <source>
        <strain>ATCC BAA-491 / LMD-9</strain>
    </source>
</reference>
<comment type="function">
    <text evidence="1">Binds directly to 23S ribosomal RNA and is necessary for the in vitro assembly process of the 50S ribosomal subunit. It is not involved in the protein synthesizing functions of that subunit.</text>
</comment>
<comment type="similarity">
    <text evidence="1">Belongs to the bacterial ribosomal protein bL20 family.</text>
</comment>
<dbReference type="EMBL" id="CP000419">
    <property type="protein sequence ID" value="ABJ66281.1"/>
    <property type="molecule type" value="Genomic_DNA"/>
</dbReference>
<dbReference type="RefSeq" id="WP_002885090.1">
    <property type="nucleotide sequence ID" value="NZ_CP086001.1"/>
</dbReference>
<dbReference type="SMR" id="Q03KJ1"/>
<dbReference type="GeneID" id="93792170"/>
<dbReference type="KEGG" id="ste:STER_1087"/>
<dbReference type="HOGENOM" id="CLU_123265_0_1_9"/>
<dbReference type="GO" id="GO:1990904">
    <property type="term" value="C:ribonucleoprotein complex"/>
    <property type="evidence" value="ECO:0007669"/>
    <property type="project" value="UniProtKB-KW"/>
</dbReference>
<dbReference type="GO" id="GO:0005840">
    <property type="term" value="C:ribosome"/>
    <property type="evidence" value="ECO:0007669"/>
    <property type="project" value="UniProtKB-KW"/>
</dbReference>
<dbReference type="GO" id="GO:0019843">
    <property type="term" value="F:rRNA binding"/>
    <property type="evidence" value="ECO:0007669"/>
    <property type="project" value="UniProtKB-UniRule"/>
</dbReference>
<dbReference type="GO" id="GO:0003735">
    <property type="term" value="F:structural constituent of ribosome"/>
    <property type="evidence" value="ECO:0007669"/>
    <property type="project" value="InterPro"/>
</dbReference>
<dbReference type="GO" id="GO:0000027">
    <property type="term" value="P:ribosomal large subunit assembly"/>
    <property type="evidence" value="ECO:0007669"/>
    <property type="project" value="UniProtKB-UniRule"/>
</dbReference>
<dbReference type="GO" id="GO:0006412">
    <property type="term" value="P:translation"/>
    <property type="evidence" value="ECO:0007669"/>
    <property type="project" value="InterPro"/>
</dbReference>
<dbReference type="CDD" id="cd07026">
    <property type="entry name" value="Ribosomal_L20"/>
    <property type="match status" value="1"/>
</dbReference>
<dbReference type="FunFam" id="1.10.1900.20:FF:000001">
    <property type="entry name" value="50S ribosomal protein L20"/>
    <property type="match status" value="1"/>
</dbReference>
<dbReference type="Gene3D" id="6.10.160.10">
    <property type="match status" value="1"/>
</dbReference>
<dbReference type="Gene3D" id="1.10.1900.20">
    <property type="entry name" value="Ribosomal protein L20"/>
    <property type="match status" value="1"/>
</dbReference>
<dbReference type="HAMAP" id="MF_00382">
    <property type="entry name" value="Ribosomal_bL20"/>
    <property type="match status" value="1"/>
</dbReference>
<dbReference type="InterPro" id="IPR005813">
    <property type="entry name" value="Ribosomal_bL20"/>
</dbReference>
<dbReference type="InterPro" id="IPR049946">
    <property type="entry name" value="RIBOSOMAL_L20_CS"/>
</dbReference>
<dbReference type="InterPro" id="IPR035566">
    <property type="entry name" value="Ribosomal_protein_bL20_C"/>
</dbReference>
<dbReference type="NCBIfam" id="TIGR01032">
    <property type="entry name" value="rplT_bact"/>
    <property type="match status" value="1"/>
</dbReference>
<dbReference type="PANTHER" id="PTHR10986">
    <property type="entry name" value="39S RIBOSOMAL PROTEIN L20"/>
    <property type="match status" value="1"/>
</dbReference>
<dbReference type="Pfam" id="PF00453">
    <property type="entry name" value="Ribosomal_L20"/>
    <property type="match status" value="1"/>
</dbReference>
<dbReference type="PRINTS" id="PR00062">
    <property type="entry name" value="RIBOSOMALL20"/>
</dbReference>
<dbReference type="SUPFAM" id="SSF74731">
    <property type="entry name" value="Ribosomal protein L20"/>
    <property type="match status" value="1"/>
</dbReference>
<dbReference type="PROSITE" id="PS00937">
    <property type="entry name" value="RIBOSOMAL_L20"/>
    <property type="match status" value="1"/>
</dbReference>
<accession>Q03KJ1</accession>
<feature type="chain" id="PRO_1000049090" description="Large ribosomal subunit protein bL20">
    <location>
        <begin position="1"/>
        <end position="119"/>
    </location>
</feature>
<keyword id="KW-0687">Ribonucleoprotein</keyword>
<keyword id="KW-0689">Ribosomal protein</keyword>
<keyword id="KW-0694">RNA-binding</keyword>
<keyword id="KW-0699">rRNA-binding</keyword>
<organism>
    <name type="scientific">Streptococcus thermophilus (strain ATCC BAA-491 / LMD-9)</name>
    <dbReference type="NCBI Taxonomy" id="322159"/>
    <lineage>
        <taxon>Bacteria</taxon>
        <taxon>Bacillati</taxon>
        <taxon>Bacillota</taxon>
        <taxon>Bacilli</taxon>
        <taxon>Lactobacillales</taxon>
        <taxon>Streptococcaceae</taxon>
        <taxon>Streptococcus</taxon>
    </lineage>
</organism>
<evidence type="ECO:0000255" key="1">
    <source>
        <dbReference type="HAMAP-Rule" id="MF_00382"/>
    </source>
</evidence>
<evidence type="ECO:0000305" key="2"/>
<gene>
    <name evidence="1" type="primary">rplT</name>
    <name type="ordered locus">STER_1087</name>
</gene>
<sequence length="119" mass="13633">MARVKGGVVSRKRRKRVLKLAKGYYGAKHILFRTAKEQVMNSYYYAYRDRRQKKRDFRKLWITRINAAARLNGLSYSQLMHGLKLAEIEVNRKMLADLAVNDAAAFTALADAAKAKLGK</sequence>
<proteinExistence type="inferred from homology"/>
<name>RL20_STRTD</name>
<protein>
    <recommendedName>
        <fullName evidence="1">Large ribosomal subunit protein bL20</fullName>
    </recommendedName>
    <alternativeName>
        <fullName evidence="2">50S ribosomal protein L20</fullName>
    </alternativeName>
</protein>